<comment type="subunit">
    <text evidence="3">Interacts with transcription complexes SCB-binding factor (SBF) and MCB-binding factor (MBF). Interacts with SWI4.</text>
</comment>
<comment type="miscellaneous">
    <text evidence="2">Present with 861 molecules/cell in log phase SD medium.</text>
</comment>
<dbReference type="EMBL" id="Z28302">
    <property type="protein sequence ID" value="CAA82156.1"/>
    <property type="molecule type" value="Genomic_DNA"/>
</dbReference>
<dbReference type="EMBL" id="AY557922">
    <property type="protein sequence ID" value="AAS56248.1"/>
    <property type="molecule type" value="Genomic_DNA"/>
</dbReference>
<dbReference type="EMBL" id="BK006944">
    <property type="protein sequence ID" value="DAA09227.1"/>
    <property type="molecule type" value="Genomic_DNA"/>
</dbReference>
<dbReference type="PIR" id="S38154">
    <property type="entry name" value="S38154"/>
</dbReference>
<dbReference type="RefSeq" id="NP_013003.1">
    <property type="nucleotide sequence ID" value="NM_001179867.1"/>
</dbReference>
<dbReference type="BioGRID" id="34208">
    <property type="interactions" value="74"/>
</dbReference>
<dbReference type="DIP" id="DIP-2702N"/>
<dbReference type="FunCoup" id="P36157">
    <property type="interactions" value="116"/>
</dbReference>
<dbReference type="IntAct" id="P36157">
    <property type="interactions" value="8"/>
</dbReference>
<dbReference type="MINT" id="P36157"/>
<dbReference type="STRING" id="4932.YKR077W"/>
<dbReference type="iPTMnet" id="P36157"/>
<dbReference type="PaxDb" id="4932-YKR077W"/>
<dbReference type="PeptideAtlas" id="P36157"/>
<dbReference type="EnsemblFungi" id="YKR077W_mRNA">
    <property type="protein sequence ID" value="YKR077W"/>
    <property type="gene ID" value="YKR077W"/>
</dbReference>
<dbReference type="GeneID" id="853952"/>
<dbReference type="KEGG" id="sce:YKR077W"/>
<dbReference type="AGR" id="SGD:S000001785"/>
<dbReference type="SGD" id="S000001785">
    <property type="gene designation" value="MSA2"/>
</dbReference>
<dbReference type="VEuPathDB" id="FungiDB:YKR077W"/>
<dbReference type="HOGENOM" id="CLU_763238_0_0_1"/>
<dbReference type="InParanoid" id="P36157"/>
<dbReference type="OMA" id="ESANNHF"/>
<dbReference type="OrthoDB" id="4056956at2759"/>
<dbReference type="BioCyc" id="YEAST:G3O-32041-MONOMER"/>
<dbReference type="BioGRID-ORCS" id="853952">
    <property type="hits" value="3 hits in 10 CRISPR screens"/>
</dbReference>
<dbReference type="PRO" id="PR:P36157"/>
<dbReference type="Proteomes" id="UP000002311">
    <property type="component" value="Chromosome XI"/>
</dbReference>
<dbReference type="RNAct" id="P36157">
    <property type="molecule type" value="protein"/>
</dbReference>
<dbReference type="GO" id="GO:0005737">
    <property type="term" value="C:cytoplasm"/>
    <property type="evidence" value="ECO:0007005"/>
    <property type="project" value="SGD"/>
</dbReference>
<dbReference type="GO" id="GO:0005634">
    <property type="term" value="C:nucleus"/>
    <property type="evidence" value="ECO:0007005"/>
    <property type="project" value="SGD"/>
</dbReference>
<dbReference type="GO" id="GO:0000082">
    <property type="term" value="P:G1/S transition of mitotic cell cycle"/>
    <property type="evidence" value="ECO:0000353"/>
    <property type="project" value="SGD"/>
</dbReference>
<dbReference type="GO" id="GO:0006357">
    <property type="term" value="P:regulation of transcription by RNA polymerase II"/>
    <property type="evidence" value="ECO:0000353"/>
    <property type="project" value="SGD"/>
</dbReference>
<reference key="1">
    <citation type="journal article" date="1994" name="Nature">
        <title>Complete DNA sequence of yeast chromosome XI.</title>
        <authorList>
            <person name="Dujon B."/>
            <person name="Alexandraki D."/>
            <person name="Andre B."/>
            <person name="Ansorge W."/>
            <person name="Baladron V."/>
            <person name="Ballesta J.P.G."/>
            <person name="Banrevi A."/>
            <person name="Bolle P.-A."/>
            <person name="Bolotin-Fukuhara M."/>
            <person name="Bossier P."/>
            <person name="Bou G."/>
            <person name="Boyer J."/>
            <person name="Buitrago M.J."/>
            <person name="Cheret G."/>
            <person name="Colleaux L."/>
            <person name="Daignan-Fornier B."/>
            <person name="del Rey F."/>
            <person name="Dion C."/>
            <person name="Domdey H."/>
            <person name="Duesterhoeft A."/>
            <person name="Duesterhus S."/>
            <person name="Entian K.-D."/>
            <person name="Erfle H."/>
            <person name="Esteban P.F."/>
            <person name="Feldmann H."/>
            <person name="Fernandes L."/>
            <person name="Fobo G.M."/>
            <person name="Fritz C."/>
            <person name="Fukuhara H."/>
            <person name="Gabel C."/>
            <person name="Gaillon L."/>
            <person name="Garcia-Cantalejo J.M."/>
            <person name="Garcia-Ramirez J.J."/>
            <person name="Gent M.E."/>
            <person name="Ghazvini M."/>
            <person name="Goffeau A."/>
            <person name="Gonzalez A."/>
            <person name="Grothues D."/>
            <person name="Guerreiro P."/>
            <person name="Hegemann J.H."/>
            <person name="Hewitt N."/>
            <person name="Hilger F."/>
            <person name="Hollenberg C.P."/>
            <person name="Horaitis O."/>
            <person name="Indge K.J."/>
            <person name="Jacquier A."/>
            <person name="James C.M."/>
            <person name="Jauniaux J.-C."/>
            <person name="Jimenez A."/>
            <person name="Keuchel H."/>
            <person name="Kirchrath L."/>
            <person name="Kleine K."/>
            <person name="Koetter P."/>
            <person name="Legrain P."/>
            <person name="Liebl S."/>
            <person name="Louis E.J."/>
            <person name="Maia e Silva A."/>
            <person name="Marck C."/>
            <person name="Monnier A.-L."/>
            <person name="Moestl D."/>
            <person name="Mueller S."/>
            <person name="Obermaier B."/>
            <person name="Oliver S.G."/>
            <person name="Pallier C."/>
            <person name="Pascolo S."/>
            <person name="Pfeiffer F."/>
            <person name="Philippsen P."/>
            <person name="Planta R.J."/>
            <person name="Pohl F.M."/>
            <person name="Pohl T.M."/>
            <person name="Poehlmann R."/>
            <person name="Portetelle D."/>
            <person name="Purnelle B."/>
            <person name="Puzos V."/>
            <person name="Ramezani Rad M."/>
            <person name="Rasmussen S.W."/>
            <person name="Remacha M.A."/>
            <person name="Revuelta J.L."/>
            <person name="Richard G.-F."/>
            <person name="Rieger M."/>
            <person name="Rodrigues-Pousada C."/>
            <person name="Rose M."/>
            <person name="Rupp T."/>
            <person name="Santos M.A."/>
            <person name="Schwager C."/>
            <person name="Sensen C."/>
            <person name="Skala J."/>
            <person name="Soares H."/>
            <person name="Sor F."/>
            <person name="Stegemann J."/>
            <person name="Tettelin H."/>
            <person name="Thierry A."/>
            <person name="Tzermia M."/>
            <person name="Urrestarazu L.A."/>
            <person name="van Dyck L."/>
            <person name="van Vliet-Reedijk J.C."/>
            <person name="Valens M."/>
            <person name="Vandenbol M."/>
            <person name="Vilela C."/>
            <person name="Vissers S."/>
            <person name="von Wettstein D."/>
            <person name="Voss H."/>
            <person name="Wiemann S."/>
            <person name="Xu G."/>
            <person name="Zimmermann J."/>
            <person name="Haasemann M."/>
            <person name="Becker I."/>
            <person name="Mewes H.-W."/>
        </authorList>
    </citation>
    <scope>NUCLEOTIDE SEQUENCE [LARGE SCALE GENOMIC DNA]</scope>
    <source>
        <strain>ATCC 204508 / S288c</strain>
    </source>
</reference>
<reference key="2">
    <citation type="journal article" date="2014" name="G3 (Bethesda)">
        <title>The reference genome sequence of Saccharomyces cerevisiae: Then and now.</title>
        <authorList>
            <person name="Engel S.R."/>
            <person name="Dietrich F.S."/>
            <person name="Fisk D.G."/>
            <person name="Binkley G."/>
            <person name="Balakrishnan R."/>
            <person name="Costanzo M.C."/>
            <person name="Dwight S.S."/>
            <person name="Hitz B.C."/>
            <person name="Karra K."/>
            <person name="Nash R.S."/>
            <person name="Weng S."/>
            <person name="Wong E.D."/>
            <person name="Lloyd P."/>
            <person name="Skrzypek M.S."/>
            <person name="Miyasato S.R."/>
            <person name="Simison M."/>
            <person name="Cherry J.M."/>
        </authorList>
    </citation>
    <scope>GENOME REANNOTATION</scope>
    <source>
        <strain>ATCC 204508 / S288c</strain>
    </source>
</reference>
<reference key="3">
    <citation type="journal article" date="2007" name="Genome Res.">
        <title>Approaching a complete repository of sequence-verified protein-encoding clones for Saccharomyces cerevisiae.</title>
        <authorList>
            <person name="Hu Y."/>
            <person name="Rolfs A."/>
            <person name="Bhullar B."/>
            <person name="Murthy T.V.S."/>
            <person name="Zhu C."/>
            <person name="Berger M.F."/>
            <person name="Camargo A.A."/>
            <person name="Kelley F."/>
            <person name="McCarron S."/>
            <person name="Jepson D."/>
            <person name="Richardson A."/>
            <person name="Raphael J."/>
            <person name="Moreira D."/>
            <person name="Taycher E."/>
            <person name="Zuo D."/>
            <person name="Mohr S."/>
            <person name="Kane M.F."/>
            <person name="Williamson J."/>
            <person name="Simpson A.J.G."/>
            <person name="Bulyk M.L."/>
            <person name="Harlow E."/>
            <person name="Marsischky G."/>
            <person name="Kolodner R.D."/>
            <person name="LaBaer J."/>
        </authorList>
    </citation>
    <scope>NUCLEOTIDE SEQUENCE [GENOMIC DNA]</scope>
    <source>
        <strain>ATCC 204508 / S288c</strain>
    </source>
</reference>
<reference key="4">
    <citation type="journal article" date="2003" name="Nature">
        <title>Global analysis of protein localization in budding yeast.</title>
        <authorList>
            <person name="Huh W.-K."/>
            <person name="Falvo J.V."/>
            <person name="Gerke L.C."/>
            <person name="Carroll A.S."/>
            <person name="Howson R.W."/>
            <person name="Weissman J.S."/>
            <person name="O'Shea E.K."/>
        </authorList>
    </citation>
    <scope>SUBCELLULAR LOCATION [LARGE SCALE ANALYSIS]</scope>
</reference>
<reference key="5">
    <citation type="journal article" date="2003" name="Nature">
        <title>Global analysis of protein expression in yeast.</title>
        <authorList>
            <person name="Ghaemmaghami S."/>
            <person name="Huh W.-K."/>
            <person name="Bower K."/>
            <person name="Howson R.W."/>
            <person name="Belle A."/>
            <person name="Dephoure N."/>
            <person name="O'Shea E.K."/>
            <person name="Weissman J.S."/>
        </authorList>
    </citation>
    <scope>LEVEL OF PROTEIN EXPRESSION [LARGE SCALE ANALYSIS]</scope>
</reference>
<reference key="6">
    <citation type="journal article" date="2008" name="J. Biol. Chem.">
        <title>The SBF- and MBF-associated protein Msa1 is required for proper timing of G1-specific transcription in Saccharomyces cerevisiae.</title>
        <authorList>
            <person name="Ashe M."/>
            <person name="de Bruin R.A.M."/>
            <person name="Kalashnikova T."/>
            <person name="McDonald W.H."/>
            <person name="Yates J.R. III"/>
            <person name="Wittenberg C."/>
        </authorList>
    </citation>
    <scope>IDENTIFICATION BY MASS SPECTROMETRY</scope>
    <scope>INTERACTION WITH SWI4; SBF AND MBF COMPLEXES</scope>
</reference>
<reference key="7">
    <citation type="journal article" date="2009" name="Science">
        <title>Global analysis of Cdk1 substrate phosphorylation sites provides insights into evolution.</title>
        <authorList>
            <person name="Holt L.J."/>
            <person name="Tuch B.B."/>
            <person name="Villen J."/>
            <person name="Johnson A.D."/>
            <person name="Gygi S.P."/>
            <person name="Morgan D.O."/>
        </authorList>
    </citation>
    <scope>PHOSPHORYLATION [LARGE SCALE ANALYSIS] AT SER-157 AND SER-292</scope>
    <scope>IDENTIFICATION BY MASS SPECTROMETRY [LARGE SCALE ANALYSIS]</scope>
</reference>
<protein>
    <recommendedName>
        <fullName>Putative transcriptional activator MSA2</fullName>
    </recommendedName>
    <alternativeName>
        <fullName>MBF and SBF-associated protein 2</fullName>
    </alternativeName>
</protein>
<gene>
    <name type="primary">MSA2</name>
    <name type="ordered locus">YKR077W</name>
</gene>
<accession>P36157</accession>
<accession>D6VXD7</accession>
<accession>Q6Q5M8</accession>
<organism>
    <name type="scientific">Saccharomyces cerevisiae (strain ATCC 204508 / S288c)</name>
    <name type="common">Baker's yeast</name>
    <dbReference type="NCBI Taxonomy" id="559292"/>
    <lineage>
        <taxon>Eukaryota</taxon>
        <taxon>Fungi</taxon>
        <taxon>Dikarya</taxon>
        <taxon>Ascomycota</taxon>
        <taxon>Saccharomycotina</taxon>
        <taxon>Saccharomycetes</taxon>
        <taxon>Saccharomycetales</taxon>
        <taxon>Saccharomycetaceae</taxon>
        <taxon>Saccharomyces</taxon>
    </lineage>
</organism>
<proteinExistence type="evidence at protein level"/>
<sequence>MVYTTPQQQQRFSSTPQSSHTLIFSPIRAPSMQTPSSLDYQSPSIVVSSSSMKVHGRSSSFGKFSLSIGQNGKATILGPINVLPTDTSKMEKPVPKKKPVTSDRVEKTRILSLLKKMRNKSSTVNKKYSKVPLKSTTSLQPAATAPSPLVSNIIKPSPKKLASPRTPNANSNLNLNFTSFQIKTGFTPNLDGILLENFTSPNTTADSQGNSASNIINNNHGSANNTNQFLFNLPLQSSPRQFRSPARLIDPLPISDWNTSLLMSPPRTTNFESANNHFNSNFAQASMLRRPSLPHIDEVIPQDSNPANYSDRSDYLSVDQNANNHNGALSEQTYNNIMKSSMISLPIEKDDATMALRKLVSRE</sequence>
<name>MSA2_YEAST</name>
<evidence type="ECO:0000256" key="1">
    <source>
        <dbReference type="SAM" id="MobiDB-lite"/>
    </source>
</evidence>
<evidence type="ECO:0000269" key="2">
    <source>
    </source>
</evidence>
<evidence type="ECO:0000269" key="3">
    <source>
    </source>
</evidence>
<evidence type="ECO:0000305" key="4"/>
<evidence type="ECO:0007744" key="5">
    <source>
    </source>
</evidence>
<keyword id="KW-0597">Phosphoprotein</keyword>
<keyword id="KW-1185">Reference proteome</keyword>
<keyword id="KW-0804">Transcription</keyword>
<keyword id="KW-0805">Transcription regulation</keyword>
<feature type="chain" id="PRO_0000203223" description="Putative transcriptional activator MSA2">
    <location>
        <begin position="1"/>
        <end position="363"/>
    </location>
</feature>
<feature type="region of interest" description="Disordered" evidence="1">
    <location>
        <begin position="1"/>
        <end position="20"/>
    </location>
</feature>
<feature type="modified residue" description="Phosphoserine" evidence="5">
    <location>
        <position position="157"/>
    </location>
</feature>
<feature type="modified residue" description="Phosphoserine" evidence="5">
    <location>
        <position position="292"/>
    </location>
</feature>
<feature type="sequence conflict" description="In Ref. 3; AAS56248." evidence="4" ref="3">
    <original>S</original>
    <variation>R</variation>
    <location>
        <position position="122"/>
    </location>
</feature>